<organism>
    <name type="scientific">Xenopus tropicalis</name>
    <name type="common">Western clawed frog</name>
    <name type="synonym">Silurana tropicalis</name>
    <dbReference type="NCBI Taxonomy" id="8364"/>
    <lineage>
        <taxon>Eukaryota</taxon>
        <taxon>Metazoa</taxon>
        <taxon>Chordata</taxon>
        <taxon>Craniata</taxon>
        <taxon>Vertebrata</taxon>
        <taxon>Euteleostomi</taxon>
        <taxon>Amphibia</taxon>
        <taxon>Batrachia</taxon>
        <taxon>Anura</taxon>
        <taxon>Pipoidea</taxon>
        <taxon>Pipidae</taxon>
        <taxon>Xenopodinae</taxon>
        <taxon>Xenopus</taxon>
        <taxon>Silurana</taxon>
    </lineage>
</organism>
<protein>
    <recommendedName>
        <fullName>Ras-related protein Rap-1b</fullName>
        <ecNumber evidence="2">3.6.5.2</ecNumber>
    </recommendedName>
</protein>
<accession>Q640R7</accession>
<feature type="chain" id="PRO_0000366917" description="Ras-related protein Rap-1b">
    <location>
        <begin position="1"/>
        <end position="181"/>
    </location>
</feature>
<feature type="propeptide" id="PRO_0000366918" description="Removed in mature form" evidence="1">
    <location>
        <begin position="182"/>
        <end position="184"/>
    </location>
</feature>
<feature type="short sequence motif" description="Effector region" evidence="3">
    <location>
        <begin position="32"/>
        <end position="40"/>
    </location>
</feature>
<feature type="binding site" evidence="1">
    <location>
        <begin position="10"/>
        <end position="17"/>
    </location>
    <ligand>
        <name>GTP</name>
        <dbReference type="ChEBI" id="CHEBI:37565"/>
    </ligand>
</feature>
<feature type="binding site" evidence="1">
    <location>
        <begin position="57"/>
        <end position="61"/>
    </location>
    <ligand>
        <name>GTP</name>
        <dbReference type="ChEBI" id="CHEBI:37565"/>
    </ligand>
</feature>
<feature type="binding site" evidence="1">
    <location>
        <begin position="116"/>
        <end position="119"/>
    </location>
    <ligand>
        <name>GTP</name>
        <dbReference type="ChEBI" id="CHEBI:37565"/>
    </ligand>
</feature>
<feature type="modified residue" description="Cysteine methyl ester" evidence="1">
    <location>
        <position position="181"/>
    </location>
</feature>
<feature type="lipid moiety-binding region" description="S-geranylgeranyl cysteine" evidence="1">
    <location>
        <position position="181"/>
    </location>
</feature>
<comment type="function">
    <text evidence="1">Probable GTP-binding protein that possesses GTPase activity. May play a role in endothelial cell polarity and endothelial barrier function (By similarity).</text>
</comment>
<comment type="catalytic activity">
    <reaction evidence="2">
        <text>GTP + H2O = GDP + phosphate + H(+)</text>
        <dbReference type="Rhea" id="RHEA:19669"/>
        <dbReference type="ChEBI" id="CHEBI:15377"/>
        <dbReference type="ChEBI" id="CHEBI:15378"/>
        <dbReference type="ChEBI" id="CHEBI:37565"/>
        <dbReference type="ChEBI" id="CHEBI:43474"/>
        <dbReference type="ChEBI" id="CHEBI:58189"/>
        <dbReference type="EC" id="3.6.5.2"/>
    </reaction>
</comment>
<comment type="subcellular location">
    <subcellularLocation>
        <location evidence="1">Cell membrane</location>
    </subcellularLocation>
    <subcellularLocation>
        <location evidence="1">Cytoplasm</location>
        <location evidence="1">Cytosol</location>
    </subcellularLocation>
    <subcellularLocation>
        <location evidence="1">Cell junction</location>
    </subcellularLocation>
    <text evidence="1">May shuttle between plasma membrane and cytosol.</text>
</comment>
<comment type="similarity">
    <text evidence="3">Belongs to the small GTPase superfamily. Ras family.</text>
</comment>
<reference key="1">
    <citation type="submission" date="2006-10" db="EMBL/GenBank/DDBJ databases">
        <authorList>
            <consortium name="Sanger Xenopus tropicalis EST/cDNA project"/>
        </authorList>
    </citation>
    <scope>NUCLEOTIDE SEQUENCE [LARGE SCALE MRNA]</scope>
    <source>
        <tissue>Tadpole</tissue>
    </source>
</reference>
<reference key="2">
    <citation type="submission" date="2004-09" db="EMBL/GenBank/DDBJ databases">
        <authorList>
            <consortium name="NIH - Xenopus Gene Collection (XGC) project"/>
        </authorList>
    </citation>
    <scope>NUCLEOTIDE SEQUENCE [LARGE SCALE MRNA]</scope>
    <source>
        <tissue>Embryo</tissue>
    </source>
</reference>
<proteinExistence type="evidence at transcript level"/>
<name>RAP1B_XENTR</name>
<evidence type="ECO:0000250" key="1"/>
<evidence type="ECO:0000250" key="2">
    <source>
        <dbReference type="UniProtKB" id="P61224"/>
    </source>
</evidence>
<evidence type="ECO:0000305" key="3"/>
<sequence>MREYKLVVLGSGGVGKSALTVQFVQGIFVEKYDPTIEDSYRKQVEVDGQQCMLEILDTAGTEQFTAMRDLYMKNGQGFALVYSITAQSTFNDLQDLREQILRVKDTDDVPMILVGNKCDLEDERVVGKEQGQNLARQWNNCAFLESSAKSKINVNEIFYDLVRQINRKTPVPGKARKKSTCHLL</sequence>
<gene>
    <name type="primary">rap1b</name>
    <name type="ORF">TTpA008e07.1</name>
</gene>
<dbReference type="EC" id="3.6.5.2" evidence="2"/>
<dbReference type="EMBL" id="CR855812">
    <property type="protein sequence ID" value="CAJ83163.1"/>
    <property type="molecule type" value="mRNA"/>
</dbReference>
<dbReference type="EMBL" id="BC082523">
    <property type="protein sequence ID" value="AAH82523.1"/>
    <property type="molecule type" value="mRNA"/>
</dbReference>
<dbReference type="RefSeq" id="NP_001008195.1">
    <property type="nucleotide sequence ID" value="NM_001008194.2"/>
</dbReference>
<dbReference type="SMR" id="Q640R7"/>
<dbReference type="FunCoup" id="Q640R7">
    <property type="interactions" value="2844"/>
</dbReference>
<dbReference type="STRING" id="8364.ENSXETP00000009660"/>
<dbReference type="PaxDb" id="8364-ENSXETP00000029726"/>
<dbReference type="DNASU" id="493557"/>
<dbReference type="GeneID" id="493557"/>
<dbReference type="KEGG" id="xtr:493557"/>
<dbReference type="AGR" id="Xenbase:XB-GENE-479036"/>
<dbReference type="CTD" id="5908"/>
<dbReference type="Xenbase" id="XB-GENE-479036">
    <property type="gene designation" value="rap1b"/>
</dbReference>
<dbReference type="eggNOG" id="KOG0395">
    <property type="taxonomic scope" value="Eukaryota"/>
</dbReference>
<dbReference type="InParanoid" id="Q640R7"/>
<dbReference type="OMA" id="MPLREFK"/>
<dbReference type="OrthoDB" id="5976022at2759"/>
<dbReference type="Reactome" id="R-XTR-354192">
    <property type="pathway name" value="Integrin signaling"/>
</dbReference>
<dbReference type="Reactome" id="R-XTR-392517">
    <property type="pathway name" value="Rap1 signalling"/>
</dbReference>
<dbReference type="Reactome" id="R-XTR-6798695">
    <property type="pathway name" value="Neutrophil degranulation"/>
</dbReference>
<dbReference type="Reactome" id="R-XTR-8875555">
    <property type="pathway name" value="MET activates RAP1 and RAC1"/>
</dbReference>
<dbReference type="Proteomes" id="UP000008143">
    <property type="component" value="Chromosome 3"/>
</dbReference>
<dbReference type="Bgee" id="ENSXETG00000026776">
    <property type="expression patterns" value="Expressed in heart and 22 other cell types or tissues"/>
</dbReference>
<dbReference type="GO" id="GO:0070161">
    <property type="term" value="C:anchoring junction"/>
    <property type="evidence" value="ECO:0007669"/>
    <property type="project" value="UniProtKB-SubCell"/>
</dbReference>
<dbReference type="GO" id="GO:0005829">
    <property type="term" value="C:cytosol"/>
    <property type="evidence" value="ECO:0007669"/>
    <property type="project" value="UniProtKB-SubCell"/>
</dbReference>
<dbReference type="GO" id="GO:0005886">
    <property type="term" value="C:plasma membrane"/>
    <property type="evidence" value="ECO:0007669"/>
    <property type="project" value="UniProtKB-SubCell"/>
</dbReference>
<dbReference type="GO" id="GO:0003925">
    <property type="term" value="F:G protein activity"/>
    <property type="evidence" value="ECO:0007669"/>
    <property type="project" value="UniProtKB-EC"/>
</dbReference>
<dbReference type="GO" id="GO:0005525">
    <property type="term" value="F:GTP binding"/>
    <property type="evidence" value="ECO:0007669"/>
    <property type="project" value="UniProtKB-KW"/>
</dbReference>
<dbReference type="GO" id="GO:0032486">
    <property type="term" value="P:Rap protein signal transduction"/>
    <property type="evidence" value="ECO:0007669"/>
    <property type="project" value="InterPro"/>
</dbReference>
<dbReference type="CDD" id="cd04175">
    <property type="entry name" value="Rap1"/>
    <property type="match status" value="1"/>
</dbReference>
<dbReference type="FunFam" id="3.40.50.300:FF:000182">
    <property type="entry name" value="ras-related protein Rap-1b"/>
    <property type="match status" value="1"/>
</dbReference>
<dbReference type="Gene3D" id="3.40.50.300">
    <property type="entry name" value="P-loop containing nucleotide triphosphate hydrolases"/>
    <property type="match status" value="1"/>
</dbReference>
<dbReference type="InterPro" id="IPR027417">
    <property type="entry name" value="P-loop_NTPase"/>
</dbReference>
<dbReference type="InterPro" id="IPR038851">
    <property type="entry name" value="Rap1"/>
</dbReference>
<dbReference type="InterPro" id="IPR005225">
    <property type="entry name" value="Small_GTP-bd"/>
</dbReference>
<dbReference type="InterPro" id="IPR001806">
    <property type="entry name" value="Small_GTPase"/>
</dbReference>
<dbReference type="InterPro" id="IPR020849">
    <property type="entry name" value="Small_GTPase_Ras-type"/>
</dbReference>
<dbReference type="NCBIfam" id="TIGR00231">
    <property type="entry name" value="small_GTP"/>
    <property type="match status" value="1"/>
</dbReference>
<dbReference type="PANTHER" id="PTHR24070">
    <property type="entry name" value="RAS, DI-RAS, AND RHEB FAMILY MEMBERS OF SMALL GTPASE SUPERFAMILY"/>
    <property type="match status" value="1"/>
</dbReference>
<dbReference type="Pfam" id="PF00071">
    <property type="entry name" value="Ras"/>
    <property type="match status" value="1"/>
</dbReference>
<dbReference type="PRINTS" id="PR00449">
    <property type="entry name" value="RASTRNSFRMNG"/>
</dbReference>
<dbReference type="SMART" id="SM00175">
    <property type="entry name" value="RAB"/>
    <property type="match status" value="1"/>
</dbReference>
<dbReference type="SMART" id="SM00176">
    <property type="entry name" value="RAN"/>
    <property type="match status" value="1"/>
</dbReference>
<dbReference type="SMART" id="SM00173">
    <property type="entry name" value="RAS"/>
    <property type="match status" value="1"/>
</dbReference>
<dbReference type="SMART" id="SM00174">
    <property type="entry name" value="RHO"/>
    <property type="match status" value="1"/>
</dbReference>
<dbReference type="SUPFAM" id="SSF52540">
    <property type="entry name" value="P-loop containing nucleoside triphosphate hydrolases"/>
    <property type="match status" value="1"/>
</dbReference>
<dbReference type="PROSITE" id="PS51421">
    <property type="entry name" value="RAS"/>
    <property type="match status" value="1"/>
</dbReference>
<keyword id="KW-0965">Cell junction</keyword>
<keyword id="KW-1003">Cell membrane</keyword>
<keyword id="KW-0963">Cytoplasm</keyword>
<keyword id="KW-0342">GTP-binding</keyword>
<keyword id="KW-0378">Hydrolase</keyword>
<keyword id="KW-0449">Lipoprotein</keyword>
<keyword id="KW-0472">Membrane</keyword>
<keyword id="KW-0488">Methylation</keyword>
<keyword id="KW-0547">Nucleotide-binding</keyword>
<keyword id="KW-0636">Prenylation</keyword>
<keyword id="KW-1185">Reference proteome</keyword>